<proteinExistence type="inferred from homology"/>
<sequence length="449" mass="50816">MLETPKVLLKNLQDCKIHFIGIGGIGISGLAKYLKAQGATISGSDIAISPSVKYLKALGVEINIPHDPKAINNQDVIIHSAIIKEDNTEIQRAKELEIPILSRKDALYSILKDKRVFSVCGAHGKSSITAMLSAICPAFGAIIGAHSKEFDSNVRESANDSLVFEADESDSSFLFSNPFCAIVPNTEPEHLEHYDHDLERFFFAYEYFLDHAQKRVIYKEDPFLKNYSKDAIVLEKKDIYNIQYILKDGEPYTSFELKDLGAFLVWGLGEHNATNASLAILSALDELNLEEIRNNLLNFKGIKKRFDILQKNALILIDDYAHHPTEISATLKSARIYADLLDTQEKIVVIWQAHKYSRLMDNLEEFKKCFLEHCDRLIILPVYSASEVKRDIDLKAHFKHYNPTFIDRVRKKGDFLELLVNDNVVETIEKGFVIGFGAGDITYQLRGEM</sequence>
<organism>
    <name type="scientific">Helicobacter pylori (strain P12)</name>
    <dbReference type="NCBI Taxonomy" id="570508"/>
    <lineage>
        <taxon>Bacteria</taxon>
        <taxon>Pseudomonadati</taxon>
        <taxon>Campylobacterota</taxon>
        <taxon>Epsilonproteobacteria</taxon>
        <taxon>Campylobacterales</taxon>
        <taxon>Helicobacteraceae</taxon>
        <taxon>Helicobacter</taxon>
    </lineage>
</organism>
<evidence type="ECO:0000255" key="1">
    <source>
        <dbReference type="HAMAP-Rule" id="MF_00046"/>
    </source>
</evidence>
<keyword id="KW-0067">ATP-binding</keyword>
<keyword id="KW-0131">Cell cycle</keyword>
<keyword id="KW-0132">Cell division</keyword>
<keyword id="KW-0133">Cell shape</keyword>
<keyword id="KW-0961">Cell wall biogenesis/degradation</keyword>
<keyword id="KW-0963">Cytoplasm</keyword>
<keyword id="KW-0436">Ligase</keyword>
<keyword id="KW-0547">Nucleotide-binding</keyword>
<keyword id="KW-0573">Peptidoglycan synthesis</keyword>
<gene>
    <name evidence="1" type="primary">murC</name>
    <name type="ordered locus">HPP12_0636</name>
</gene>
<comment type="function">
    <text evidence="1">Cell wall formation.</text>
</comment>
<comment type="catalytic activity">
    <reaction evidence="1">
        <text>UDP-N-acetyl-alpha-D-muramate + L-alanine + ATP = UDP-N-acetyl-alpha-D-muramoyl-L-alanine + ADP + phosphate + H(+)</text>
        <dbReference type="Rhea" id="RHEA:23372"/>
        <dbReference type="ChEBI" id="CHEBI:15378"/>
        <dbReference type="ChEBI" id="CHEBI:30616"/>
        <dbReference type="ChEBI" id="CHEBI:43474"/>
        <dbReference type="ChEBI" id="CHEBI:57972"/>
        <dbReference type="ChEBI" id="CHEBI:70757"/>
        <dbReference type="ChEBI" id="CHEBI:83898"/>
        <dbReference type="ChEBI" id="CHEBI:456216"/>
        <dbReference type="EC" id="6.3.2.8"/>
    </reaction>
</comment>
<comment type="pathway">
    <text evidence="1">Cell wall biogenesis; peptidoglycan biosynthesis.</text>
</comment>
<comment type="subcellular location">
    <subcellularLocation>
        <location evidence="1">Cytoplasm</location>
    </subcellularLocation>
</comment>
<comment type="similarity">
    <text evidence="1">Belongs to the MurCDEF family.</text>
</comment>
<protein>
    <recommendedName>
        <fullName evidence="1">UDP-N-acetylmuramate--L-alanine ligase</fullName>
        <ecNumber evidence="1">6.3.2.8</ecNumber>
    </recommendedName>
    <alternativeName>
        <fullName evidence="1">UDP-N-acetylmuramoyl-L-alanine synthetase</fullName>
    </alternativeName>
</protein>
<name>MURC_HELP2</name>
<feature type="chain" id="PRO_1000091106" description="UDP-N-acetylmuramate--L-alanine ligase">
    <location>
        <begin position="1"/>
        <end position="449"/>
    </location>
</feature>
<feature type="binding site" evidence="1">
    <location>
        <begin position="121"/>
        <end position="127"/>
    </location>
    <ligand>
        <name>ATP</name>
        <dbReference type="ChEBI" id="CHEBI:30616"/>
    </ligand>
</feature>
<reference key="1">
    <citation type="submission" date="2008-10" db="EMBL/GenBank/DDBJ databases">
        <title>The complete genome sequence of Helicobacter pylori strain P12.</title>
        <authorList>
            <person name="Fischer W."/>
            <person name="Windhager L."/>
            <person name="Karnholz A."/>
            <person name="Zeiller M."/>
            <person name="Zimmer R."/>
            <person name="Haas R."/>
        </authorList>
    </citation>
    <scope>NUCLEOTIDE SEQUENCE [LARGE SCALE GENOMIC DNA]</scope>
    <source>
        <strain>P12</strain>
    </source>
</reference>
<dbReference type="EC" id="6.3.2.8" evidence="1"/>
<dbReference type="EMBL" id="CP001217">
    <property type="protein sequence ID" value="ACJ07789.1"/>
    <property type="molecule type" value="Genomic_DNA"/>
</dbReference>
<dbReference type="SMR" id="B6JLL1"/>
<dbReference type="KEGG" id="hpp:HPP12_0636"/>
<dbReference type="HOGENOM" id="CLU_028104_2_2_7"/>
<dbReference type="UniPathway" id="UPA00219"/>
<dbReference type="Proteomes" id="UP000008198">
    <property type="component" value="Chromosome"/>
</dbReference>
<dbReference type="GO" id="GO:0005737">
    <property type="term" value="C:cytoplasm"/>
    <property type="evidence" value="ECO:0007669"/>
    <property type="project" value="UniProtKB-SubCell"/>
</dbReference>
<dbReference type="GO" id="GO:0005524">
    <property type="term" value="F:ATP binding"/>
    <property type="evidence" value="ECO:0007669"/>
    <property type="project" value="UniProtKB-UniRule"/>
</dbReference>
<dbReference type="GO" id="GO:0008763">
    <property type="term" value="F:UDP-N-acetylmuramate-L-alanine ligase activity"/>
    <property type="evidence" value="ECO:0007669"/>
    <property type="project" value="UniProtKB-UniRule"/>
</dbReference>
<dbReference type="GO" id="GO:0051301">
    <property type="term" value="P:cell division"/>
    <property type="evidence" value="ECO:0007669"/>
    <property type="project" value="UniProtKB-KW"/>
</dbReference>
<dbReference type="GO" id="GO:0071555">
    <property type="term" value="P:cell wall organization"/>
    <property type="evidence" value="ECO:0007669"/>
    <property type="project" value="UniProtKB-KW"/>
</dbReference>
<dbReference type="GO" id="GO:0009252">
    <property type="term" value="P:peptidoglycan biosynthetic process"/>
    <property type="evidence" value="ECO:0007669"/>
    <property type="project" value="UniProtKB-UniRule"/>
</dbReference>
<dbReference type="GO" id="GO:0008360">
    <property type="term" value="P:regulation of cell shape"/>
    <property type="evidence" value="ECO:0007669"/>
    <property type="project" value="UniProtKB-KW"/>
</dbReference>
<dbReference type="Gene3D" id="3.90.190.20">
    <property type="entry name" value="Mur ligase, C-terminal domain"/>
    <property type="match status" value="1"/>
</dbReference>
<dbReference type="Gene3D" id="3.40.1190.10">
    <property type="entry name" value="Mur-like, catalytic domain"/>
    <property type="match status" value="1"/>
</dbReference>
<dbReference type="Gene3D" id="3.40.50.720">
    <property type="entry name" value="NAD(P)-binding Rossmann-like Domain"/>
    <property type="match status" value="1"/>
</dbReference>
<dbReference type="HAMAP" id="MF_00046">
    <property type="entry name" value="MurC"/>
    <property type="match status" value="1"/>
</dbReference>
<dbReference type="InterPro" id="IPR036565">
    <property type="entry name" value="Mur-like_cat_sf"/>
</dbReference>
<dbReference type="InterPro" id="IPR004101">
    <property type="entry name" value="Mur_ligase_C"/>
</dbReference>
<dbReference type="InterPro" id="IPR036615">
    <property type="entry name" value="Mur_ligase_C_dom_sf"/>
</dbReference>
<dbReference type="InterPro" id="IPR013221">
    <property type="entry name" value="Mur_ligase_cen"/>
</dbReference>
<dbReference type="InterPro" id="IPR000713">
    <property type="entry name" value="Mur_ligase_N"/>
</dbReference>
<dbReference type="InterPro" id="IPR050061">
    <property type="entry name" value="MurCDEF_pg_biosynth"/>
</dbReference>
<dbReference type="InterPro" id="IPR005758">
    <property type="entry name" value="UDP-N-AcMur_Ala_ligase_MurC"/>
</dbReference>
<dbReference type="NCBIfam" id="TIGR01082">
    <property type="entry name" value="murC"/>
    <property type="match status" value="1"/>
</dbReference>
<dbReference type="PANTHER" id="PTHR43445:SF3">
    <property type="entry name" value="UDP-N-ACETYLMURAMATE--L-ALANINE LIGASE"/>
    <property type="match status" value="1"/>
</dbReference>
<dbReference type="PANTHER" id="PTHR43445">
    <property type="entry name" value="UDP-N-ACETYLMURAMATE--L-ALANINE LIGASE-RELATED"/>
    <property type="match status" value="1"/>
</dbReference>
<dbReference type="Pfam" id="PF01225">
    <property type="entry name" value="Mur_ligase"/>
    <property type="match status" value="1"/>
</dbReference>
<dbReference type="Pfam" id="PF02875">
    <property type="entry name" value="Mur_ligase_C"/>
    <property type="match status" value="1"/>
</dbReference>
<dbReference type="Pfam" id="PF08245">
    <property type="entry name" value="Mur_ligase_M"/>
    <property type="match status" value="1"/>
</dbReference>
<dbReference type="SUPFAM" id="SSF51984">
    <property type="entry name" value="MurCD N-terminal domain"/>
    <property type="match status" value="1"/>
</dbReference>
<dbReference type="SUPFAM" id="SSF53623">
    <property type="entry name" value="MurD-like peptide ligases, catalytic domain"/>
    <property type="match status" value="1"/>
</dbReference>
<dbReference type="SUPFAM" id="SSF53244">
    <property type="entry name" value="MurD-like peptide ligases, peptide-binding domain"/>
    <property type="match status" value="1"/>
</dbReference>
<accession>B6JLL1</accession>